<keyword id="KW-1003">Cell membrane</keyword>
<keyword id="KW-0472">Membrane</keyword>
<keyword id="KW-0479">Metal-binding</keyword>
<keyword id="KW-0813">Transport</keyword>
<keyword id="KW-0862">Zinc</keyword>
<feature type="chain" id="PRO_0000387256" description="Probable inorganic carbon transporter subunit DabA">
    <location>
        <begin position="1"/>
        <end position="839"/>
    </location>
</feature>
<feature type="binding site" evidence="1">
    <location>
        <position position="353"/>
    </location>
    <ligand>
        <name>Zn(2+)</name>
        <dbReference type="ChEBI" id="CHEBI:29105"/>
    </ligand>
</feature>
<feature type="binding site" evidence="1">
    <location>
        <position position="355"/>
    </location>
    <ligand>
        <name>Zn(2+)</name>
        <dbReference type="ChEBI" id="CHEBI:29105"/>
    </ligand>
</feature>
<feature type="binding site" evidence="1">
    <location>
        <position position="537"/>
    </location>
    <ligand>
        <name>Zn(2+)</name>
        <dbReference type="ChEBI" id="CHEBI:29105"/>
    </ligand>
</feature>
<feature type="binding site" evidence="1">
    <location>
        <position position="552"/>
    </location>
    <ligand>
        <name>Zn(2+)</name>
        <dbReference type="ChEBI" id="CHEBI:29105"/>
    </ligand>
</feature>
<protein>
    <recommendedName>
        <fullName evidence="1">Probable inorganic carbon transporter subunit DabA</fullName>
    </recommendedName>
</protein>
<reference key="1">
    <citation type="submission" date="2008-12" db="EMBL/GenBank/DDBJ databases">
        <title>Complete sequence of Chloroflexus aggregans DSM 9485.</title>
        <authorList>
            <consortium name="US DOE Joint Genome Institute"/>
            <person name="Lucas S."/>
            <person name="Copeland A."/>
            <person name="Lapidus A."/>
            <person name="Glavina del Rio T."/>
            <person name="Dalin E."/>
            <person name="Tice H."/>
            <person name="Pitluck S."/>
            <person name="Foster B."/>
            <person name="Larimer F."/>
            <person name="Land M."/>
            <person name="Hauser L."/>
            <person name="Kyrpides N."/>
            <person name="Mikhailova N."/>
            <person name="Bryant D.A."/>
            <person name="Richardson P."/>
        </authorList>
    </citation>
    <scope>NUCLEOTIDE SEQUENCE [LARGE SCALE GENOMIC DNA]</scope>
    <source>
        <strain>MD-66 / DSM 9485</strain>
    </source>
</reference>
<name>DABA_CHLAD</name>
<sequence>MTMVETNIKTMSVFANPTPTLSREDIADAVRRAEQRIAPLWPLRNFVAVNPYLGLIDHSFAQAAHVLACRAGARMTLPRSFYAQAIACGRITDDDLAAALAEGIPFRNAPETVAALKAFARDNAPEPVGNVLPTVADLAAKVTGSNWSTIVTDSISNWAGAYFDQGQSYWRSPWAKLPAYEAWRAEAAFDRTPLVRGARAFHRVLRAMPGTAAETIAVAIEQLQVPATGLEAYLHRLLLSIHGWASYARYLRWEAELYGGHDKTLTDLLAIRLVWEVALWQSFARDGVAAAWERSIDEMRHGQDDDEYKRVLGGDLLLQRAFEYAYRRQLFAQLGVAAPGTPVTRKRVQAAFCIDVRSEIFRRALETVSGEIETIGFAGFFGFPIEYIPLAEVEGGAQCPVLLTPQFVITESVDGATPSEVEAAITKRAMRQRVAKAWRMFKFAPVSCFGFVGPVGLAYVRKLLLDTLGITRPVPHPATFGLDGQTRARVKPSLEPRPFNGRLIGMSLPQRIAAAAGALKAMSLTDNFARIVLLAGHGSTTVNNPHATGLDCGACGGHTGEANVRVAVQILNDPAVRAGLREHGIVIPSDTVFVAGLHDTTTDDVTIFDKGDIPASHADDLQRLERDLVAAGRLARAERAALLNVDRNTDIDRAVRRRSTDWSQVRPEWGLAGCAAFIAAPRERTAGISLDGRAFLHNYNWRQDGDFSVLELIMTAPMIVASWINLQYFGSTVDNRVFGSGNKTLHNVVGTLGVLEGNGGDLRVGLPWQSVHDGKRYVHEPIRLHVLIEAPIEAMTAIITKHEQVQQLLDNDWLYLFAIGENGKVTHRYTGGLRWETCA</sequence>
<accession>B8G619</accession>
<comment type="function">
    <text evidence="1">Part of an energy-coupled inorganic carbon pump.</text>
</comment>
<comment type="cofactor">
    <cofactor evidence="1">
        <name>Zn(2+)</name>
        <dbReference type="ChEBI" id="CHEBI:29105"/>
    </cofactor>
</comment>
<comment type="subunit">
    <text evidence="1">Forms a complex with DabB.</text>
</comment>
<comment type="subcellular location">
    <subcellularLocation>
        <location evidence="1">Cell membrane</location>
        <topology evidence="1">Peripheral membrane protein</topology>
    </subcellularLocation>
</comment>
<comment type="similarity">
    <text evidence="1">Belongs to the inorganic carbon transporter (TC 9.A.2) DabA family.</text>
</comment>
<evidence type="ECO:0000255" key="1">
    <source>
        <dbReference type="HAMAP-Rule" id="MF_01871"/>
    </source>
</evidence>
<dbReference type="EMBL" id="CP001337">
    <property type="protein sequence ID" value="ACL25752.1"/>
    <property type="molecule type" value="Genomic_DNA"/>
</dbReference>
<dbReference type="RefSeq" id="WP_015941608.1">
    <property type="nucleotide sequence ID" value="NC_011831.1"/>
</dbReference>
<dbReference type="STRING" id="326427.Cagg_2891"/>
<dbReference type="KEGG" id="cag:Cagg_2891"/>
<dbReference type="eggNOG" id="COG3002">
    <property type="taxonomic scope" value="Bacteria"/>
</dbReference>
<dbReference type="HOGENOM" id="CLU_009885_0_0_0"/>
<dbReference type="OrthoDB" id="9805101at2"/>
<dbReference type="Proteomes" id="UP000002508">
    <property type="component" value="Chromosome"/>
</dbReference>
<dbReference type="GO" id="GO:0005886">
    <property type="term" value="C:plasma membrane"/>
    <property type="evidence" value="ECO:0007669"/>
    <property type="project" value="UniProtKB-SubCell"/>
</dbReference>
<dbReference type="GO" id="GO:0008270">
    <property type="term" value="F:zinc ion binding"/>
    <property type="evidence" value="ECO:0007669"/>
    <property type="project" value="UniProtKB-UniRule"/>
</dbReference>
<dbReference type="HAMAP" id="MF_01871">
    <property type="entry name" value="DabA"/>
    <property type="match status" value="1"/>
</dbReference>
<dbReference type="InterPro" id="IPR018752">
    <property type="entry name" value="DabA"/>
</dbReference>
<dbReference type="PANTHER" id="PTHR38344:SF1">
    <property type="entry name" value="INORGANIC CARBON TRANSPORTER SUBUNIT DABA-RELATED"/>
    <property type="match status" value="1"/>
</dbReference>
<dbReference type="PANTHER" id="PTHR38344">
    <property type="entry name" value="UPF0753 PROTEIN AQ_863"/>
    <property type="match status" value="1"/>
</dbReference>
<dbReference type="Pfam" id="PF10070">
    <property type="entry name" value="DabA"/>
    <property type="match status" value="1"/>
</dbReference>
<proteinExistence type="inferred from homology"/>
<gene>
    <name evidence="1" type="primary">dabA</name>
    <name type="ordered locus">Cagg_2891</name>
</gene>
<organism>
    <name type="scientific">Chloroflexus aggregans (strain MD-66 / DSM 9485)</name>
    <dbReference type="NCBI Taxonomy" id="326427"/>
    <lineage>
        <taxon>Bacteria</taxon>
        <taxon>Bacillati</taxon>
        <taxon>Chloroflexota</taxon>
        <taxon>Chloroflexia</taxon>
        <taxon>Chloroflexales</taxon>
        <taxon>Chloroflexineae</taxon>
        <taxon>Chloroflexaceae</taxon>
        <taxon>Chloroflexus</taxon>
    </lineage>
</organism>